<dbReference type="EC" id="2.7.7.27" evidence="1"/>
<dbReference type="EMBL" id="CP000918">
    <property type="protein sequence ID" value="ACO16090.1"/>
    <property type="molecule type" value="Genomic_DNA"/>
</dbReference>
<dbReference type="RefSeq" id="WP_000787275.1">
    <property type="nucleotide sequence ID" value="NC_012468.1"/>
</dbReference>
<dbReference type="SMR" id="C1C7B5"/>
<dbReference type="KEGG" id="snm:SP70585_1192"/>
<dbReference type="HOGENOM" id="CLU_029499_14_0_9"/>
<dbReference type="UniPathway" id="UPA00164"/>
<dbReference type="Proteomes" id="UP000002211">
    <property type="component" value="Chromosome"/>
</dbReference>
<dbReference type="GO" id="GO:0005524">
    <property type="term" value="F:ATP binding"/>
    <property type="evidence" value="ECO:0007669"/>
    <property type="project" value="UniProtKB-KW"/>
</dbReference>
<dbReference type="GO" id="GO:0008878">
    <property type="term" value="F:glucose-1-phosphate adenylyltransferase activity"/>
    <property type="evidence" value="ECO:0007669"/>
    <property type="project" value="UniProtKB-UniRule"/>
</dbReference>
<dbReference type="GO" id="GO:0005978">
    <property type="term" value="P:glycogen biosynthetic process"/>
    <property type="evidence" value="ECO:0007669"/>
    <property type="project" value="UniProtKB-UniRule"/>
</dbReference>
<dbReference type="CDD" id="cd02508">
    <property type="entry name" value="ADP_Glucose_PP"/>
    <property type="match status" value="1"/>
</dbReference>
<dbReference type="CDD" id="cd04651">
    <property type="entry name" value="LbH_G1P_AT_C"/>
    <property type="match status" value="1"/>
</dbReference>
<dbReference type="Gene3D" id="2.160.10.10">
    <property type="entry name" value="Hexapeptide repeat proteins"/>
    <property type="match status" value="1"/>
</dbReference>
<dbReference type="Gene3D" id="3.90.550.10">
    <property type="entry name" value="Spore Coat Polysaccharide Biosynthesis Protein SpsA, Chain A"/>
    <property type="match status" value="1"/>
</dbReference>
<dbReference type="HAMAP" id="MF_00624">
    <property type="entry name" value="GlgC"/>
    <property type="match status" value="1"/>
</dbReference>
<dbReference type="InterPro" id="IPR011831">
    <property type="entry name" value="ADP-Glc_PPase"/>
</dbReference>
<dbReference type="InterPro" id="IPR005836">
    <property type="entry name" value="ADP_Glu_pyroP_CS"/>
</dbReference>
<dbReference type="InterPro" id="IPR023049">
    <property type="entry name" value="GlgC_bac"/>
</dbReference>
<dbReference type="InterPro" id="IPR056818">
    <property type="entry name" value="GlmU/GlgC-like_hexapep"/>
</dbReference>
<dbReference type="InterPro" id="IPR005835">
    <property type="entry name" value="NTP_transferase_dom"/>
</dbReference>
<dbReference type="InterPro" id="IPR029044">
    <property type="entry name" value="Nucleotide-diphossugar_trans"/>
</dbReference>
<dbReference type="InterPro" id="IPR011004">
    <property type="entry name" value="Trimer_LpxA-like_sf"/>
</dbReference>
<dbReference type="NCBIfam" id="TIGR02091">
    <property type="entry name" value="glgC"/>
    <property type="match status" value="1"/>
</dbReference>
<dbReference type="NCBIfam" id="NF003670">
    <property type="entry name" value="PRK05293.1"/>
    <property type="match status" value="1"/>
</dbReference>
<dbReference type="PANTHER" id="PTHR43523:SF2">
    <property type="entry name" value="GLUCOSE-1-PHOSPHATE ADENYLYLTRANSFERASE"/>
    <property type="match status" value="1"/>
</dbReference>
<dbReference type="PANTHER" id="PTHR43523">
    <property type="entry name" value="GLUCOSE-1-PHOSPHATE ADENYLYLTRANSFERASE-RELATED"/>
    <property type="match status" value="1"/>
</dbReference>
<dbReference type="Pfam" id="PF24894">
    <property type="entry name" value="Hexapep_GlmU"/>
    <property type="match status" value="1"/>
</dbReference>
<dbReference type="Pfam" id="PF00483">
    <property type="entry name" value="NTP_transferase"/>
    <property type="match status" value="1"/>
</dbReference>
<dbReference type="SUPFAM" id="SSF53448">
    <property type="entry name" value="Nucleotide-diphospho-sugar transferases"/>
    <property type="match status" value="1"/>
</dbReference>
<dbReference type="SUPFAM" id="SSF51161">
    <property type="entry name" value="Trimeric LpxA-like enzymes"/>
    <property type="match status" value="1"/>
</dbReference>
<dbReference type="PROSITE" id="PS00808">
    <property type="entry name" value="ADP_GLC_PYROPHOSPH_1"/>
    <property type="match status" value="1"/>
</dbReference>
<dbReference type="PROSITE" id="PS00809">
    <property type="entry name" value="ADP_GLC_PYROPHOSPH_2"/>
    <property type="match status" value="1"/>
</dbReference>
<dbReference type="PROSITE" id="PS00810">
    <property type="entry name" value="ADP_GLC_PYROPHOSPH_3"/>
    <property type="match status" value="1"/>
</dbReference>
<feature type="chain" id="PRO_1000147235" description="Glucose-1-phosphate adenylyltransferase">
    <location>
        <begin position="1"/>
        <end position="380"/>
    </location>
</feature>
<feature type="binding site" evidence="1">
    <location>
        <position position="164"/>
    </location>
    <ligand>
        <name>alpha-D-glucose 1-phosphate</name>
        <dbReference type="ChEBI" id="CHEBI:58601"/>
    </ligand>
</feature>
<feature type="binding site" evidence="1">
    <location>
        <begin position="179"/>
        <end position="180"/>
    </location>
    <ligand>
        <name>alpha-D-glucose 1-phosphate</name>
        <dbReference type="ChEBI" id="CHEBI:58601"/>
    </ligand>
</feature>
<feature type="binding site" evidence="1">
    <location>
        <position position="190"/>
    </location>
    <ligand>
        <name>alpha-D-glucose 1-phosphate</name>
        <dbReference type="ChEBI" id="CHEBI:58601"/>
    </ligand>
</feature>
<name>GLGC_STRP7</name>
<sequence>MKNEMLALILAGGQGTRLGKLTQSIAKPAVQFGGRYRIIDFALSNCANSGIHNVGVVTQYQPLALNNHIGNGSSWGLDGINSGVSILQPYSASEGNRWFEGTSHAIYQNIDYIDSVNPEYVLILSGDHIYKMDYDDMLQSHKDNNASLTVAVLDVPLKEASRFGIMNTDANNRIVEFEEKPAQPKSTKASMGIYIFDWQRLRNMLVAAEKSKVGMSDFGKNVIPNYLESGESVYAYEFSGYWKDVGTIESLWEANMEYISPENALDSRNRQWKIYSRNLISPPNFLGANAHVEDSLVVDGCFVDGTVKHSILSTGAQVREGAEILDSVIMSGAIIGQGAKIKRAIIGEGAIISDGVEIDGTDEVQVVGYNEVVGVATDED</sequence>
<reference key="1">
    <citation type="journal article" date="2010" name="Genome Biol.">
        <title>Structure and dynamics of the pan-genome of Streptococcus pneumoniae and closely related species.</title>
        <authorList>
            <person name="Donati C."/>
            <person name="Hiller N.L."/>
            <person name="Tettelin H."/>
            <person name="Muzzi A."/>
            <person name="Croucher N.J."/>
            <person name="Angiuoli S.V."/>
            <person name="Oggioni M."/>
            <person name="Dunning Hotopp J.C."/>
            <person name="Hu F.Z."/>
            <person name="Riley D.R."/>
            <person name="Covacci A."/>
            <person name="Mitchell T.J."/>
            <person name="Bentley S.D."/>
            <person name="Kilian M."/>
            <person name="Ehrlich G.D."/>
            <person name="Rappuoli R."/>
            <person name="Moxon E.R."/>
            <person name="Masignani V."/>
        </authorList>
    </citation>
    <scope>NUCLEOTIDE SEQUENCE [LARGE SCALE GENOMIC DNA]</scope>
    <source>
        <strain>70585</strain>
    </source>
</reference>
<comment type="function">
    <text evidence="1">Involved in the biosynthesis of ADP-glucose, a building block required for the elongation reactions to produce glycogen. Catalyzes the reaction between ATP and alpha-D-glucose 1-phosphate (G1P) to produce pyrophosphate and ADP-Glc.</text>
</comment>
<comment type="catalytic activity">
    <reaction evidence="1">
        <text>alpha-D-glucose 1-phosphate + ATP + H(+) = ADP-alpha-D-glucose + diphosphate</text>
        <dbReference type="Rhea" id="RHEA:12120"/>
        <dbReference type="ChEBI" id="CHEBI:15378"/>
        <dbReference type="ChEBI" id="CHEBI:30616"/>
        <dbReference type="ChEBI" id="CHEBI:33019"/>
        <dbReference type="ChEBI" id="CHEBI:57498"/>
        <dbReference type="ChEBI" id="CHEBI:58601"/>
        <dbReference type="EC" id="2.7.7.27"/>
    </reaction>
</comment>
<comment type="pathway">
    <text evidence="1">Glycan biosynthesis; glycogen biosynthesis.</text>
</comment>
<comment type="subunit">
    <text evidence="1">Homotetramer.</text>
</comment>
<comment type="similarity">
    <text evidence="1">Belongs to the bacterial/plant glucose-1-phosphate adenylyltransferase family.</text>
</comment>
<accession>C1C7B5</accession>
<gene>
    <name evidence="1" type="primary">glgC</name>
    <name type="ordered locus">SP70585_1192</name>
</gene>
<protein>
    <recommendedName>
        <fullName evidence="1">Glucose-1-phosphate adenylyltransferase</fullName>
        <ecNumber evidence="1">2.7.7.27</ecNumber>
    </recommendedName>
    <alternativeName>
        <fullName evidence="1">ADP-glucose pyrophosphorylase</fullName>
        <shortName evidence="1">ADPGlc PPase</shortName>
    </alternativeName>
    <alternativeName>
        <fullName evidence="1">ADP-glucose synthase</fullName>
    </alternativeName>
</protein>
<evidence type="ECO:0000255" key="1">
    <source>
        <dbReference type="HAMAP-Rule" id="MF_00624"/>
    </source>
</evidence>
<proteinExistence type="inferred from homology"/>
<organism>
    <name type="scientific">Streptococcus pneumoniae (strain 70585)</name>
    <dbReference type="NCBI Taxonomy" id="488221"/>
    <lineage>
        <taxon>Bacteria</taxon>
        <taxon>Bacillati</taxon>
        <taxon>Bacillota</taxon>
        <taxon>Bacilli</taxon>
        <taxon>Lactobacillales</taxon>
        <taxon>Streptococcaceae</taxon>
        <taxon>Streptococcus</taxon>
    </lineage>
</organism>
<keyword id="KW-0067">ATP-binding</keyword>
<keyword id="KW-0119">Carbohydrate metabolism</keyword>
<keyword id="KW-0320">Glycogen biosynthesis</keyword>
<keyword id="KW-0321">Glycogen metabolism</keyword>
<keyword id="KW-0547">Nucleotide-binding</keyword>
<keyword id="KW-0548">Nucleotidyltransferase</keyword>
<keyword id="KW-0808">Transferase</keyword>